<reference key="1">
    <citation type="journal article" date="2003" name="Proc. Natl. Acad. Sci. U.S.A.">
        <title>The complete genome sequence of Chromobacterium violaceum reveals remarkable and exploitable bacterial adaptability.</title>
        <authorList>
            <person name="Vasconcelos A.T.R."/>
            <person name="de Almeida D.F."/>
            <person name="Hungria M."/>
            <person name="Guimaraes C.T."/>
            <person name="Antonio R.V."/>
            <person name="Almeida F.C."/>
            <person name="de Almeida L.G.P."/>
            <person name="de Almeida R."/>
            <person name="Alves-Gomes J.A."/>
            <person name="Andrade E.M."/>
            <person name="Araripe J."/>
            <person name="de Araujo M.F.F."/>
            <person name="Astolfi-Filho S."/>
            <person name="Azevedo V."/>
            <person name="Baptista A.J."/>
            <person name="Bataus L.A.M."/>
            <person name="Batista J.S."/>
            <person name="Belo A."/>
            <person name="van den Berg C."/>
            <person name="Bogo M."/>
            <person name="Bonatto S."/>
            <person name="Bordignon J."/>
            <person name="Brigido M.M."/>
            <person name="Brito C.A."/>
            <person name="Brocchi M."/>
            <person name="Burity H.A."/>
            <person name="Camargo A.A."/>
            <person name="Cardoso D.D.P."/>
            <person name="Carneiro N.P."/>
            <person name="Carraro D.M."/>
            <person name="Carvalho C.M.B."/>
            <person name="Cascardo J.C.M."/>
            <person name="Cavada B.S."/>
            <person name="Chueire L.M.O."/>
            <person name="Creczynski-Pasa T.B."/>
            <person name="Cunha-Junior N.C."/>
            <person name="Fagundes N."/>
            <person name="Falcao C.L."/>
            <person name="Fantinatti F."/>
            <person name="Farias I.P."/>
            <person name="Felipe M.S.S."/>
            <person name="Ferrari L.P."/>
            <person name="Ferro J.A."/>
            <person name="Ferro M.I.T."/>
            <person name="Franco G.R."/>
            <person name="Freitas N.S.A."/>
            <person name="Furlan L.R."/>
            <person name="Gazzinelli R.T."/>
            <person name="Gomes E.A."/>
            <person name="Goncalves P.R."/>
            <person name="Grangeiro T.B."/>
            <person name="Grattapaglia D."/>
            <person name="Grisard E.C."/>
            <person name="Hanna E.S."/>
            <person name="Jardim S.N."/>
            <person name="Laurino J."/>
            <person name="Leoi L.C.T."/>
            <person name="Lima L.F.A."/>
            <person name="Loureiro M.F."/>
            <person name="Lyra M.C.C.P."/>
            <person name="Madeira H.M.F."/>
            <person name="Manfio G.P."/>
            <person name="Maranhao A.Q."/>
            <person name="Martins W.S."/>
            <person name="di Mauro S.M.Z."/>
            <person name="de Medeiros S.R.B."/>
            <person name="Meissner R.V."/>
            <person name="Moreira M.A.M."/>
            <person name="Nascimento F.F."/>
            <person name="Nicolas M.F."/>
            <person name="Oliveira J.G."/>
            <person name="Oliveira S.C."/>
            <person name="Paixao R.F.C."/>
            <person name="Parente J.A."/>
            <person name="Pedrosa F.O."/>
            <person name="Pena S.D.J."/>
            <person name="Pereira J.O."/>
            <person name="Pereira M."/>
            <person name="Pinto L.S.R.C."/>
            <person name="Pinto L.S."/>
            <person name="Porto J.I.R."/>
            <person name="Potrich D.P."/>
            <person name="Ramalho-Neto C.E."/>
            <person name="Reis A.M.M."/>
            <person name="Rigo L.U."/>
            <person name="Rondinelli E."/>
            <person name="Santos E.B.P."/>
            <person name="Santos F.R."/>
            <person name="Schneider M.P.C."/>
            <person name="Seuanez H.N."/>
            <person name="Silva A.M.R."/>
            <person name="da Silva A.L.C."/>
            <person name="Silva D.W."/>
            <person name="Silva R."/>
            <person name="Simoes I.C."/>
            <person name="Simon D."/>
            <person name="Soares C.M.A."/>
            <person name="Soares R.B.A."/>
            <person name="Souza E.M."/>
            <person name="Souza K.R.L."/>
            <person name="Souza R.C."/>
            <person name="Steffens M.B.R."/>
            <person name="Steindel M."/>
            <person name="Teixeira S.R."/>
            <person name="Urmenyi T."/>
            <person name="Vettore A."/>
            <person name="Wassem R."/>
            <person name="Zaha A."/>
            <person name="Simpson A.J.G."/>
        </authorList>
    </citation>
    <scope>NUCLEOTIDE SEQUENCE [LARGE SCALE GENOMIC DNA]</scope>
    <source>
        <strain>ATCC 12472 / DSM 30191 / JCM 1249 / CCUG 213 / NBRC 12614 / NCIMB 9131 / NCTC 9757 / MK</strain>
    </source>
</reference>
<organism>
    <name type="scientific">Chromobacterium violaceum (strain ATCC 12472 / DSM 30191 / JCM 1249 / CCUG 213 / NBRC 12614 / NCIMB 9131 / NCTC 9757 / MK)</name>
    <dbReference type="NCBI Taxonomy" id="243365"/>
    <lineage>
        <taxon>Bacteria</taxon>
        <taxon>Pseudomonadati</taxon>
        <taxon>Pseudomonadota</taxon>
        <taxon>Betaproteobacteria</taxon>
        <taxon>Neisseriales</taxon>
        <taxon>Chromobacteriaceae</taxon>
        <taxon>Chromobacterium</taxon>
    </lineage>
</organism>
<accession>Q7NSP3</accession>
<comment type="function">
    <text evidence="1">Prevents the cell division inhibition by proteins MinC and MinD at internal division sites while permitting inhibition at polar sites. This ensures cell division at the proper site by restricting the formation of a division septum at the midpoint of the long axis of the cell.</text>
</comment>
<comment type="similarity">
    <text evidence="1">Belongs to the MinE family.</text>
</comment>
<name>MINE_CHRVO</name>
<gene>
    <name evidence="1" type="primary">minE</name>
    <name type="ordered locus">CV_3377</name>
</gene>
<feature type="chain" id="PRO_0000298097" description="Cell division topological specificity factor">
    <location>
        <begin position="1"/>
        <end position="85"/>
    </location>
</feature>
<keyword id="KW-0131">Cell cycle</keyword>
<keyword id="KW-0132">Cell division</keyword>
<keyword id="KW-1185">Reference proteome</keyword>
<protein>
    <recommendedName>
        <fullName evidence="1">Cell division topological specificity factor</fullName>
    </recommendedName>
</protein>
<evidence type="ECO:0000255" key="1">
    <source>
        <dbReference type="HAMAP-Rule" id="MF_00262"/>
    </source>
</evidence>
<sequence length="85" mass="9968">MSLIDMIFGKRQKSAAIARERLQIILAHERNGRHAPDYLPALQRELMEVISKYVSVNLEDIKVQVERQDDYEVLEVNIVLPEHQR</sequence>
<dbReference type="EMBL" id="AE016825">
    <property type="protein sequence ID" value="AAQ61041.1"/>
    <property type="molecule type" value="Genomic_DNA"/>
</dbReference>
<dbReference type="RefSeq" id="WP_011136924.1">
    <property type="nucleotide sequence ID" value="NC_005085.1"/>
</dbReference>
<dbReference type="SMR" id="Q7NSP3"/>
<dbReference type="STRING" id="243365.CV_3377"/>
<dbReference type="GeneID" id="68841079"/>
<dbReference type="KEGG" id="cvi:CV_3377"/>
<dbReference type="eggNOG" id="COG0851">
    <property type="taxonomic scope" value="Bacteria"/>
</dbReference>
<dbReference type="HOGENOM" id="CLU_137929_2_1_4"/>
<dbReference type="OrthoDB" id="9802655at2"/>
<dbReference type="Proteomes" id="UP000001424">
    <property type="component" value="Chromosome"/>
</dbReference>
<dbReference type="GO" id="GO:0051301">
    <property type="term" value="P:cell division"/>
    <property type="evidence" value="ECO:0007669"/>
    <property type="project" value="UniProtKB-KW"/>
</dbReference>
<dbReference type="GO" id="GO:0032955">
    <property type="term" value="P:regulation of division septum assembly"/>
    <property type="evidence" value="ECO:0007669"/>
    <property type="project" value="InterPro"/>
</dbReference>
<dbReference type="FunFam" id="3.30.1070.10:FF:000001">
    <property type="entry name" value="Cell division topological specificity factor"/>
    <property type="match status" value="1"/>
</dbReference>
<dbReference type="Gene3D" id="3.30.1070.10">
    <property type="entry name" value="Cell division topological specificity factor MinE"/>
    <property type="match status" value="1"/>
</dbReference>
<dbReference type="HAMAP" id="MF_00262">
    <property type="entry name" value="MinE"/>
    <property type="match status" value="1"/>
</dbReference>
<dbReference type="InterPro" id="IPR005527">
    <property type="entry name" value="MinE"/>
</dbReference>
<dbReference type="InterPro" id="IPR036707">
    <property type="entry name" value="MinE_sf"/>
</dbReference>
<dbReference type="NCBIfam" id="TIGR01215">
    <property type="entry name" value="minE"/>
    <property type="match status" value="1"/>
</dbReference>
<dbReference type="NCBIfam" id="NF001422">
    <property type="entry name" value="PRK00296.1"/>
    <property type="match status" value="1"/>
</dbReference>
<dbReference type="NCBIfam" id="NF010595">
    <property type="entry name" value="PRK13989.1"/>
    <property type="match status" value="1"/>
</dbReference>
<dbReference type="Pfam" id="PF03776">
    <property type="entry name" value="MinE"/>
    <property type="match status" value="1"/>
</dbReference>
<dbReference type="SUPFAM" id="SSF55229">
    <property type="entry name" value="Cell division protein MinE topological specificity domain"/>
    <property type="match status" value="1"/>
</dbReference>
<proteinExistence type="inferred from homology"/>